<comment type="function">
    <text evidence="1">Cell wall formation. Catalyzes the addition of glutamate to the nucleotide precursor UDP-N-acetylmuramoyl-L-alanine (UMA).</text>
</comment>
<comment type="catalytic activity">
    <reaction evidence="1">
        <text>UDP-N-acetyl-alpha-D-muramoyl-L-alanine + D-glutamate + ATP = UDP-N-acetyl-alpha-D-muramoyl-L-alanyl-D-glutamate + ADP + phosphate + H(+)</text>
        <dbReference type="Rhea" id="RHEA:16429"/>
        <dbReference type="ChEBI" id="CHEBI:15378"/>
        <dbReference type="ChEBI" id="CHEBI:29986"/>
        <dbReference type="ChEBI" id="CHEBI:30616"/>
        <dbReference type="ChEBI" id="CHEBI:43474"/>
        <dbReference type="ChEBI" id="CHEBI:83898"/>
        <dbReference type="ChEBI" id="CHEBI:83900"/>
        <dbReference type="ChEBI" id="CHEBI:456216"/>
        <dbReference type="EC" id="6.3.2.9"/>
    </reaction>
</comment>
<comment type="pathway">
    <text evidence="1">Cell wall biogenesis; peptidoglycan biosynthesis.</text>
</comment>
<comment type="subcellular location">
    <subcellularLocation>
        <location evidence="1">Cytoplasm</location>
    </subcellularLocation>
</comment>
<comment type="similarity">
    <text evidence="1">Belongs to the MurCDEF family.</text>
</comment>
<accession>Q5NPA7</accession>
<protein>
    <recommendedName>
        <fullName evidence="1">UDP-N-acetylmuramoylalanine--D-glutamate ligase</fullName>
        <ecNumber evidence="1">6.3.2.9</ecNumber>
    </recommendedName>
    <alternativeName>
        <fullName evidence="1">D-glutamic acid-adding enzyme</fullName>
    </alternativeName>
    <alternativeName>
        <fullName evidence="1">UDP-N-acetylmuramoyl-L-alanyl-D-glutamate synthetase</fullName>
    </alternativeName>
</protein>
<gene>
    <name evidence="1" type="primary">murD</name>
    <name type="ordered locus">ZMO0829</name>
</gene>
<dbReference type="EC" id="6.3.2.9" evidence="1"/>
<dbReference type="EMBL" id="AE008692">
    <property type="protein sequence ID" value="AAV89453.1"/>
    <property type="molecule type" value="Genomic_DNA"/>
</dbReference>
<dbReference type="RefSeq" id="WP_011240699.1">
    <property type="nucleotide sequence ID" value="NZ_CP035711.1"/>
</dbReference>
<dbReference type="SMR" id="Q5NPA7"/>
<dbReference type="STRING" id="264203.ZMO0829"/>
<dbReference type="KEGG" id="zmo:ZMO0829"/>
<dbReference type="eggNOG" id="COG0771">
    <property type="taxonomic scope" value="Bacteria"/>
</dbReference>
<dbReference type="HOGENOM" id="CLU_032540_3_0_5"/>
<dbReference type="UniPathway" id="UPA00219"/>
<dbReference type="Proteomes" id="UP000001173">
    <property type="component" value="Chromosome"/>
</dbReference>
<dbReference type="GO" id="GO:0005737">
    <property type="term" value="C:cytoplasm"/>
    <property type="evidence" value="ECO:0007669"/>
    <property type="project" value="UniProtKB-SubCell"/>
</dbReference>
<dbReference type="GO" id="GO:0005524">
    <property type="term" value="F:ATP binding"/>
    <property type="evidence" value="ECO:0007669"/>
    <property type="project" value="UniProtKB-UniRule"/>
</dbReference>
<dbReference type="GO" id="GO:0004326">
    <property type="term" value="F:tetrahydrofolylpolyglutamate synthase activity"/>
    <property type="evidence" value="ECO:0007669"/>
    <property type="project" value="InterPro"/>
</dbReference>
<dbReference type="GO" id="GO:0008764">
    <property type="term" value="F:UDP-N-acetylmuramoylalanine-D-glutamate ligase activity"/>
    <property type="evidence" value="ECO:0007669"/>
    <property type="project" value="UniProtKB-UniRule"/>
</dbReference>
<dbReference type="GO" id="GO:0051301">
    <property type="term" value="P:cell division"/>
    <property type="evidence" value="ECO:0007669"/>
    <property type="project" value="UniProtKB-KW"/>
</dbReference>
<dbReference type="GO" id="GO:0071555">
    <property type="term" value="P:cell wall organization"/>
    <property type="evidence" value="ECO:0007669"/>
    <property type="project" value="UniProtKB-KW"/>
</dbReference>
<dbReference type="GO" id="GO:0009252">
    <property type="term" value="P:peptidoglycan biosynthetic process"/>
    <property type="evidence" value="ECO:0007669"/>
    <property type="project" value="UniProtKB-UniRule"/>
</dbReference>
<dbReference type="GO" id="GO:0008360">
    <property type="term" value="P:regulation of cell shape"/>
    <property type="evidence" value="ECO:0007669"/>
    <property type="project" value="UniProtKB-KW"/>
</dbReference>
<dbReference type="Gene3D" id="3.90.190.20">
    <property type="entry name" value="Mur ligase, C-terminal domain"/>
    <property type="match status" value="1"/>
</dbReference>
<dbReference type="Gene3D" id="3.40.1190.10">
    <property type="entry name" value="Mur-like, catalytic domain"/>
    <property type="match status" value="1"/>
</dbReference>
<dbReference type="Gene3D" id="3.40.50.720">
    <property type="entry name" value="NAD(P)-binding Rossmann-like Domain"/>
    <property type="match status" value="1"/>
</dbReference>
<dbReference type="HAMAP" id="MF_00639">
    <property type="entry name" value="MurD"/>
    <property type="match status" value="1"/>
</dbReference>
<dbReference type="InterPro" id="IPR018109">
    <property type="entry name" value="Folylpolyglutamate_synth_CS"/>
</dbReference>
<dbReference type="InterPro" id="IPR036565">
    <property type="entry name" value="Mur-like_cat_sf"/>
</dbReference>
<dbReference type="InterPro" id="IPR004101">
    <property type="entry name" value="Mur_ligase_C"/>
</dbReference>
<dbReference type="InterPro" id="IPR036615">
    <property type="entry name" value="Mur_ligase_C_dom_sf"/>
</dbReference>
<dbReference type="InterPro" id="IPR013221">
    <property type="entry name" value="Mur_ligase_cen"/>
</dbReference>
<dbReference type="InterPro" id="IPR005762">
    <property type="entry name" value="MurD"/>
</dbReference>
<dbReference type="NCBIfam" id="TIGR01087">
    <property type="entry name" value="murD"/>
    <property type="match status" value="1"/>
</dbReference>
<dbReference type="PANTHER" id="PTHR43692">
    <property type="entry name" value="UDP-N-ACETYLMURAMOYLALANINE--D-GLUTAMATE LIGASE"/>
    <property type="match status" value="1"/>
</dbReference>
<dbReference type="PANTHER" id="PTHR43692:SF1">
    <property type="entry name" value="UDP-N-ACETYLMURAMOYLALANINE--D-GLUTAMATE LIGASE"/>
    <property type="match status" value="1"/>
</dbReference>
<dbReference type="Pfam" id="PF02875">
    <property type="entry name" value="Mur_ligase_C"/>
    <property type="match status" value="1"/>
</dbReference>
<dbReference type="Pfam" id="PF08245">
    <property type="entry name" value="Mur_ligase_M"/>
    <property type="match status" value="1"/>
</dbReference>
<dbReference type="SUPFAM" id="SSF51984">
    <property type="entry name" value="MurCD N-terminal domain"/>
    <property type="match status" value="1"/>
</dbReference>
<dbReference type="SUPFAM" id="SSF53623">
    <property type="entry name" value="MurD-like peptide ligases, catalytic domain"/>
    <property type="match status" value="1"/>
</dbReference>
<dbReference type="SUPFAM" id="SSF53244">
    <property type="entry name" value="MurD-like peptide ligases, peptide-binding domain"/>
    <property type="match status" value="1"/>
</dbReference>
<feature type="chain" id="PRO_0000109134" description="UDP-N-acetylmuramoylalanine--D-glutamate ligase">
    <location>
        <begin position="1"/>
        <end position="441"/>
    </location>
</feature>
<feature type="binding site" evidence="1">
    <location>
        <begin position="129"/>
        <end position="135"/>
    </location>
    <ligand>
        <name>ATP</name>
        <dbReference type="ChEBI" id="CHEBI:30616"/>
    </ligand>
</feature>
<name>MURD_ZYMMO</name>
<evidence type="ECO:0000255" key="1">
    <source>
        <dbReference type="HAMAP-Rule" id="MF_00639"/>
    </source>
</evidence>
<sequence length="441" mass="47476">MITSPVFSGQFYAVLGLARSGMATVAALLASDAKVMAWDNNPETRDRLQQQYQEAIDKGRLVISDPMIADIFGISAFVVSPGIPINRHPIAALAKERGIPIIGDIELFAQAHGFWERHGRRCPVVGITGTNGKSTTTALIHHILKEAGLPTLMGGNIGLPLLAADPLPDGGVYVLELSSYQIDLTFTLDCDIAVLTNITPDHLDRHGGFEGYRKAKERLFLLQSSPHYAVIATDDIPSQVIAKQSAAHLVTVHADNISAEDQVNWPNLQGPHNAQNAVLAMAVAHILGISDDVISKALISYAGLPHRMQKIGERRGVLFIDDSKATNAMATAPALAAFPAIHWILGGVPKTADLDPCKAFYNHIRQAYTIGQAGPDYAQLLREAGVNVVECGTLEKAVRLAAEEAQPDEVVMLTPACASFDQFSDYEARGQAFKKIVEALD</sequence>
<keyword id="KW-0067">ATP-binding</keyword>
<keyword id="KW-0131">Cell cycle</keyword>
<keyword id="KW-0132">Cell division</keyword>
<keyword id="KW-0133">Cell shape</keyword>
<keyword id="KW-0961">Cell wall biogenesis/degradation</keyword>
<keyword id="KW-0963">Cytoplasm</keyword>
<keyword id="KW-0436">Ligase</keyword>
<keyword id="KW-0547">Nucleotide-binding</keyword>
<keyword id="KW-0573">Peptidoglycan synthesis</keyword>
<keyword id="KW-1185">Reference proteome</keyword>
<reference key="1">
    <citation type="journal article" date="2005" name="Nat. Biotechnol.">
        <title>The genome sequence of the ethanologenic bacterium Zymomonas mobilis ZM4.</title>
        <authorList>
            <person name="Seo J.-S."/>
            <person name="Chong H."/>
            <person name="Park H.S."/>
            <person name="Yoon K.-O."/>
            <person name="Jung C."/>
            <person name="Kim J.J."/>
            <person name="Hong J.H."/>
            <person name="Kim H."/>
            <person name="Kim J.-H."/>
            <person name="Kil J.-I."/>
            <person name="Park C.J."/>
            <person name="Oh H.-M."/>
            <person name="Lee J.-S."/>
            <person name="Jin S.-J."/>
            <person name="Um H.-W."/>
            <person name="Lee H.-J."/>
            <person name="Oh S.-J."/>
            <person name="Kim J.Y."/>
            <person name="Kang H.L."/>
            <person name="Lee S.Y."/>
            <person name="Lee K.J."/>
            <person name="Kang H.S."/>
        </authorList>
    </citation>
    <scope>NUCLEOTIDE SEQUENCE [LARGE SCALE GENOMIC DNA]</scope>
    <source>
        <strain>ATCC 31821 / ZM4 / CP4</strain>
    </source>
</reference>
<proteinExistence type="inferred from homology"/>
<organism>
    <name type="scientific">Zymomonas mobilis subsp. mobilis (strain ATCC 31821 / ZM4 / CP4)</name>
    <dbReference type="NCBI Taxonomy" id="264203"/>
    <lineage>
        <taxon>Bacteria</taxon>
        <taxon>Pseudomonadati</taxon>
        <taxon>Pseudomonadota</taxon>
        <taxon>Alphaproteobacteria</taxon>
        <taxon>Sphingomonadales</taxon>
        <taxon>Zymomonadaceae</taxon>
        <taxon>Zymomonas</taxon>
    </lineage>
</organism>